<comment type="function">
    <text evidence="1">Involved in transcriptional regulation. Represses the transcription of a number of genes including gastrin, stromelysin and enolase. Binds to the G-rich box in the enhancer region of these genes (By similarity).</text>
</comment>
<comment type="subunit">
    <text evidence="2 3">Interacts with HNRNPDL. Interacts with the 5FMC complex; the interaction requires association with CHTOP. Interacts with CAVIN1.</text>
</comment>
<comment type="subcellular location">
    <subcellularLocation>
        <location evidence="1">Nucleus</location>
    </subcellularLocation>
</comment>
<comment type="PTM">
    <text evidence="1">Sumoylated with SUMO2. Desumoylated by SENP3, resulting in the stimulation of transcription of its target genes (By similarity).</text>
</comment>
<comment type="similarity">
    <text evidence="6">Belongs to the krueppel C2H2-type zinc-finger protein family.</text>
</comment>
<keyword id="KW-0007">Acetylation</keyword>
<keyword id="KW-0238">DNA-binding</keyword>
<keyword id="KW-1017">Isopeptide bond</keyword>
<keyword id="KW-0479">Metal-binding</keyword>
<keyword id="KW-0539">Nucleus</keyword>
<keyword id="KW-0597">Phosphoprotein</keyword>
<keyword id="KW-1185">Reference proteome</keyword>
<keyword id="KW-0677">Repeat</keyword>
<keyword id="KW-0678">Repressor</keyword>
<keyword id="KW-0804">Transcription</keyword>
<keyword id="KW-0805">Transcription regulation</keyword>
<keyword id="KW-0832">Ubl conjugation</keyword>
<keyword id="KW-0862">Zinc</keyword>
<keyword id="KW-0863">Zinc-finger</keyword>
<name>ZN148_BOVIN</name>
<feature type="chain" id="PRO_0000247550" description="Zinc finger protein 148">
    <location>
        <begin position="1"/>
        <end position="794"/>
    </location>
</feature>
<feature type="zinc finger region" description="C2H2-type 1" evidence="4">
    <location>
        <begin position="171"/>
        <end position="193"/>
    </location>
</feature>
<feature type="zinc finger region" description="C2H2-type 2" evidence="4">
    <location>
        <begin position="199"/>
        <end position="221"/>
    </location>
</feature>
<feature type="zinc finger region" description="C2H2-type 3" evidence="4">
    <location>
        <begin position="227"/>
        <end position="249"/>
    </location>
</feature>
<feature type="zinc finger region" description="C2H2-type 4" evidence="4">
    <location>
        <begin position="255"/>
        <end position="278"/>
    </location>
</feature>
<feature type="region of interest" description="Disordered" evidence="5">
    <location>
        <begin position="298"/>
        <end position="338"/>
    </location>
</feature>
<feature type="region of interest" description="Disordered" evidence="5">
    <location>
        <begin position="575"/>
        <end position="596"/>
    </location>
</feature>
<feature type="region of interest" description="Disordered" evidence="5">
    <location>
        <begin position="775"/>
        <end position="794"/>
    </location>
</feature>
<feature type="compositionally biased region" description="Basic and acidic residues" evidence="5">
    <location>
        <begin position="321"/>
        <end position="338"/>
    </location>
</feature>
<feature type="compositionally biased region" description="Polar residues" evidence="5">
    <location>
        <begin position="575"/>
        <end position="588"/>
    </location>
</feature>
<feature type="modified residue" description="Phosphoserine" evidence="2">
    <location>
        <position position="51"/>
    </location>
</feature>
<feature type="modified residue" description="Phosphothreonine" evidence="3">
    <location>
        <position position="194"/>
    </location>
</feature>
<feature type="modified residue" description="Phosphoserine" evidence="3">
    <location>
        <position position="250"/>
    </location>
</feature>
<feature type="modified residue" description="Phosphoserine" evidence="2">
    <location>
        <position position="301"/>
    </location>
</feature>
<feature type="modified residue" description="Phosphoserine" evidence="3">
    <location>
        <position position="306"/>
    </location>
</feature>
<feature type="modified residue" description="Phosphoserine" evidence="3">
    <location>
        <position position="412"/>
    </location>
</feature>
<feature type="modified residue" description="N6-acetyllysine" evidence="3">
    <location>
        <position position="607"/>
    </location>
</feature>
<feature type="modified residue" description="Phosphoserine" evidence="3">
    <location>
        <position position="665"/>
    </location>
</feature>
<feature type="modified residue" description="Phosphoserine" evidence="3">
    <location>
        <position position="784"/>
    </location>
</feature>
<feature type="cross-link" description="Glycyl lysine isopeptide (Lys-Gly) (interchain with G-Cter in SUMO2)" evidence="3">
    <location>
        <position position="6"/>
    </location>
</feature>
<feature type="cross-link" description="Glycyl lysine isopeptide (Lys-Gly) (interchain with G-Cter in SUMO2)" evidence="3">
    <location>
        <position position="88"/>
    </location>
</feature>
<feature type="cross-link" description="Glycyl lysine isopeptide (Lys-Gly) (interchain with G-Cter in SUMO2)" evidence="3">
    <location>
        <position position="115"/>
    </location>
</feature>
<feature type="cross-link" description="Glycyl lysine isopeptide (Lys-Gly) (interchain with G-Cter in SUMO2)" evidence="3">
    <location>
        <position position="132"/>
    </location>
</feature>
<feature type="cross-link" description="Glycyl lysine isopeptide (Lys-Gly) (interchain with G-Cter in SUMO2)" evidence="3">
    <location>
        <position position="291"/>
    </location>
</feature>
<feature type="cross-link" description="Glycyl lysine isopeptide (Lys-Gly) (interchain with G-Cter in SUMO2)" evidence="3">
    <location>
        <position position="308"/>
    </location>
</feature>
<feature type="cross-link" description="Glycyl lysine isopeptide (Lys-Gly) (interchain with G-Cter in SUMO1); alternate" evidence="3">
    <location>
        <position position="356"/>
    </location>
</feature>
<feature type="cross-link" description="Glycyl lysine isopeptide (Lys-Gly) (interchain with G-Cter in SUMO2); alternate" evidence="3">
    <location>
        <position position="356"/>
    </location>
</feature>
<feature type="cross-link" description="Glycyl lysine isopeptide (Lys-Gly) (interchain with G-Cter in SUMO2)" evidence="3">
    <location>
        <position position="402"/>
    </location>
</feature>
<feature type="cross-link" description="Glycyl lysine isopeptide (Lys-Gly) (interchain with G-Cter in SUMO2)" evidence="3">
    <location>
        <position position="421"/>
    </location>
</feature>
<feature type="cross-link" description="Glycyl lysine isopeptide (Lys-Gly) (interchain with G-Cter in SUMO2)" evidence="3">
    <location>
        <position position="424"/>
    </location>
</feature>
<dbReference type="EMBL" id="DQ162621">
    <property type="protein sequence ID" value="AAZ86076.1"/>
    <property type="molecule type" value="mRNA"/>
</dbReference>
<dbReference type="RefSeq" id="NP_001028293.1">
    <property type="nucleotide sequence ID" value="NM_001033121.1"/>
</dbReference>
<dbReference type="SMR" id="Q3Y4E1"/>
<dbReference type="FunCoup" id="Q3Y4E1">
    <property type="interactions" value="2775"/>
</dbReference>
<dbReference type="STRING" id="9913.ENSBTAP00000067678"/>
<dbReference type="PaxDb" id="9913-ENSBTAP00000000628"/>
<dbReference type="GeneID" id="613265"/>
<dbReference type="KEGG" id="bta:613265"/>
<dbReference type="CTD" id="7707"/>
<dbReference type="eggNOG" id="KOG1721">
    <property type="taxonomic scope" value="Eukaryota"/>
</dbReference>
<dbReference type="InParanoid" id="Q3Y4E1"/>
<dbReference type="OrthoDB" id="8117402at2759"/>
<dbReference type="Proteomes" id="UP000009136">
    <property type="component" value="Unplaced"/>
</dbReference>
<dbReference type="GO" id="GO:0005634">
    <property type="term" value="C:nucleus"/>
    <property type="evidence" value="ECO:0007669"/>
    <property type="project" value="UniProtKB-SubCell"/>
</dbReference>
<dbReference type="GO" id="GO:0003700">
    <property type="term" value="F:DNA-binding transcription factor activity"/>
    <property type="evidence" value="ECO:0000318"/>
    <property type="project" value="GO_Central"/>
</dbReference>
<dbReference type="GO" id="GO:0000978">
    <property type="term" value="F:RNA polymerase II cis-regulatory region sequence-specific DNA binding"/>
    <property type="evidence" value="ECO:0000318"/>
    <property type="project" value="GO_Central"/>
</dbReference>
<dbReference type="GO" id="GO:0008270">
    <property type="term" value="F:zinc ion binding"/>
    <property type="evidence" value="ECO:0007669"/>
    <property type="project" value="UniProtKB-KW"/>
</dbReference>
<dbReference type="GO" id="GO:0006357">
    <property type="term" value="P:regulation of transcription by RNA polymerase II"/>
    <property type="evidence" value="ECO:0000318"/>
    <property type="project" value="GO_Central"/>
</dbReference>
<dbReference type="FunFam" id="3.30.160.60:FF:004830">
    <property type="match status" value="1"/>
</dbReference>
<dbReference type="FunFam" id="3.30.160.60:FF:000067">
    <property type="entry name" value="Vascular endothelial zinc finger 1"/>
    <property type="match status" value="1"/>
</dbReference>
<dbReference type="FunFam" id="3.30.160.60:FF:000042">
    <property type="entry name" value="Zinc finger protein 148"/>
    <property type="match status" value="2"/>
</dbReference>
<dbReference type="Gene3D" id="3.30.160.60">
    <property type="entry name" value="Classic Zinc Finger"/>
    <property type="match status" value="4"/>
</dbReference>
<dbReference type="InterPro" id="IPR050752">
    <property type="entry name" value="C2H2-ZF_domain"/>
</dbReference>
<dbReference type="InterPro" id="IPR036236">
    <property type="entry name" value="Znf_C2H2_sf"/>
</dbReference>
<dbReference type="InterPro" id="IPR013087">
    <property type="entry name" value="Znf_C2H2_type"/>
</dbReference>
<dbReference type="PANTHER" id="PTHR24384:SF189">
    <property type="entry name" value="C2H2-TYPE DOMAIN-CONTAINING PROTEIN-RELATED"/>
    <property type="match status" value="1"/>
</dbReference>
<dbReference type="PANTHER" id="PTHR24384">
    <property type="entry name" value="FINGER PUTATIVE TRANSCRIPTION FACTOR FAMILY-RELATED"/>
    <property type="match status" value="1"/>
</dbReference>
<dbReference type="Pfam" id="PF00096">
    <property type="entry name" value="zf-C2H2"/>
    <property type="match status" value="3"/>
</dbReference>
<dbReference type="SMART" id="SM00355">
    <property type="entry name" value="ZnF_C2H2"/>
    <property type="match status" value="4"/>
</dbReference>
<dbReference type="SUPFAM" id="SSF57667">
    <property type="entry name" value="beta-beta-alpha zinc fingers"/>
    <property type="match status" value="2"/>
</dbReference>
<dbReference type="PROSITE" id="PS00028">
    <property type="entry name" value="ZINC_FINGER_C2H2_1"/>
    <property type="match status" value="4"/>
</dbReference>
<dbReference type="PROSITE" id="PS50157">
    <property type="entry name" value="ZINC_FINGER_C2H2_2"/>
    <property type="match status" value="4"/>
</dbReference>
<proteinExistence type="evidence at transcript level"/>
<evidence type="ECO:0000250" key="1"/>
<evidence type="ECO:0000250" key="2">
    <source>
        <dbReference type="UniProtKB" id="Q61624"/>
    </source>
</evidence>
<evidence type="ECO:0000250" key="3">
    <source>
        <dbReference type="UniProtKB" id="Q9UQR1"/>
    </source>
</evidence>
<evidence type="ECO:0000255" key="4">
    <source>
        <dbReference type="PROSITE-ProRule" id="PRU00042"/>
    </source>
</evidence>
<evidence type="ECO:0000256" key="5">
    <source>
        <dbReference type="SAM" id="MobiDB-lite"/>
    </source>
</evidence>
<evidence type="ECO:0000305" key="6"/>
<organism>
    <name type="scientific">Bos taurus</name>
    <name type="common">Bovine</name>
    <dbReference type="NCBI Taxonomy" id="9913"/>
    <lineage>
        <taxon>Eukaryota</taxon>
        <taxon>Metazoa</taxon>
        <taxon>Chordata</taxon>
        <taxon>Craniata</taxon>
        <taxon>Vertebrata</taxon>
        <taxon>Euteleostomi</taxon>
        <taxon>Mammalia</taxon>
        <taxon>Eutheria</taxon>
        <taxon>Laurasiatheria</taxon>
        <taxon>Artiodactyla</taxon>
        <taxon>Ruminantia</taxon>
        <taxon>Pecora</taxon>
        <taxon>Bovidae</taxon>
        <taxon>Bovinae</taxon>
        <taxon>Bos</taxon>
    </lineage>
</organism>
<reference key="1">
    <citation type="submission" date="2005-08" db="EMBL/GenBank/DDBJ databases">
        <title>Cloning and characterization of the bovine ZBP-89 mRNA.</title>
        <authorList>
            <person name="Jiang H."/>
            <person name="Xu Q."/>
            <person name="Springer L."/>
        </authorList>
    </citation>
    <scope>NUCLEOTIDE SEQUENCE [MRNA]</scope>
    <source>
        <tissue>Liver</tissue>
    </source>
</reference>
<sequence length="794" mass="89003">MNIDDKLEGLFLKCGGIDEMQSSRAMVVMGGVSGQSTVSGELQESVLQDRSMPHQEILAADEVLQESEMRQQDMISHDELMVHEETVKNDEEQMETHERLPQGLQYALNVPISVKQEITFTDVSEQLMRDKKQIREPVDLQKKKKRKQRSPAKILTINEDGSLGLKTPKSHVCEHCNAAFRTNYHLQRHVFIHTGEKPFQCSQCDMRFIQKYLLQRHEKIHTGEKPFRCDECGMRFIQKYHMERHKRTHSGEKPYQCEYCLQYFSRTDRVLKHKRMCHENHDKKLNRCAIKGGLLTSEEDSGFSTSPKDNSLPKKKRQKTEKKSSGMDKESSLDKSDLKKDKNDYLPLYSSSTKVKDEYMVAEYAVEMPHSSVGGSHLEDASGEIHPPKLVLKKINSKRSLKQPLEQNQTISPLSTYEESKVSKYAFELVDKQALLDSEGNADIDQVDNLQEGPSKPVHSSTNYDDAMQFLKKKRYLQAASNNSREYALNVGTIASQPSVTQAAVASVIDESTTASILDSQALNVEIKSNHDKNVIPDEVLQTLLDHYSHKANGQHEISFSVADTEVTSSISINSSEVPEVTQSENVGSSSQASSSDKANMLQEYSKFLQQALDRTSQNDAYLNSPSLNFVTDNQTLPNQPAFSSIDKQVYATMPINSFRSGMNSPLRTTPDKSHFGLIVGDSQHSFPFSGDETNHASATSTQDFLDQVTSQKKAEAQPVHQAYQMSSFEQPFRAPYHGSRAGIATQFSTANGQVNLRGPGTSAEFPEFPLVNVNDNRAGMTSSPDATTGQTFG</sequence>
<accession>Q3Y4E1</accession>
<gene>
    <name type="primary">ZNF148</name>
    <name type="synonym">ZBP89</name>
</gene>
<protein>
    <recommendedName>
        <fullName>Zinc finger protein 148</fullName>
    </recommendedName>
    <alternativeName>
        <fullName>Transcription factor ZBP-89</fullName>
    </alternativeName>
    <alternativeName>
        <fullName>Zinc finger DNA-binding protein 89</fullName>
    </alternativeName>
</protein>